<protein>
    <recommendedName>
        <fullName>Beta-adrenergic receptor kinase 1</fullName>
        <shortName>Beta-ARK-1</shortName>
        <ecNumber evidence="3">2.7.11.15</ecNumber>
    </recommendedName>
    <alternativeName>
        <fullName evidence="2">G-protein-coupled receptor kinase 2</fullName>
    </alternativeName>
</protein>
<organism>
    <name type="scientific">Mesocricetus auratus</name>
    <name type="common">Golden hamster</name>
    <dbReference type="NCBI Taxonomy" id="10036"/>
    <lineage>
        <taxon>Eukaryota</taxon>
        <taxon>Metazoa</taxon>
        <taxon>Chordata</taxon>
        <taxon>Craniata</taxon>
        <taxon>Vertebrata</taxon>
        <taxon>Euteleostomi</taxon>
        <taxon>Mammalia</taxon>
        <taxon>Eutheria</taxon>
        <taxon>Euarchontoglires</taxon>
        <taxon>Glires</taxon>
        <taxon>Rodentia</taxon>
        <taxon>Myomorpha</taxon>
        <taxon>Muroidea</taxon>
        <taxon>Cricetidae</taxon>
        <taxon>Cricetinae</taxon>
        <taxon>Mesocricetus</taxon>
    </lineage>
</organism>
<reference key="1">
    <citation type="journal article" date="1996" name="Biochem. Biophys. Res. Commun.">
        <title>Enhanced expression of beta-adrenergic receptor kinase 1 in the hearts of cardiomyopathic Syrian hamsters, BIO53.58.</title>
        <authorList>
            <person name="Urasawa K."/>
            <person name="Yoshida I."/>
            <person name="Takagi C."/>
            <person name="Onozuka H."/>
            <person name="Mikami T."/>
            <person name="Kawaguchi H."/>
            <person name="Kitabatake A."/>
        </authorList>
    </citation>
    <scope>NUCLEOTIDE SEQUENCE [MRNA]</scope>
    <source>
        <tissue>Heart</tissue>
    </source>
</reference>
<name>ARBK1_MESAU</name>
<accession>Q64682</accession>
<keyword id="KW-0067">ATP-binding</keyword>
<keyword id="KW-1003">Cell membrane</keyword>
<keyword id="KW-0966">Cell projection</keyword>
<keyword id="KW-0963">Cytoplasm</keyword>
<keyword id="KW-0418">Kinase</keyword>
<keyword id="KW-0472">Membrane</keyword>
<keyword id="KW-0547">Nucleotide-binding</keyword>
<keyword id="KW-0597">Phosphoprotein</keyword>
<keyword id="KW-1185">Reference proteome</keyword>
<keyword id="KW-0723">Serine/threonine-protein kinase</keyword>
<keyword id="KW-0770">Synapse</keyword>
<keyword id="KW-0808">Transferase</keyword>
<gene>
    <name evidence="2" type="primary">GRK2</name>
    <name type="synonym">ADRBK1</name>
</gene>
<evidence type="ECO:0000250" key="1">
    <source>
        <dbReference type="UniProtKB" id="P21146"/>
    </source>
</evidence>
<evidence type="ECO:0000250" key="2">
    <source>
        <dbReference type="UniProtKB" id="P25098"/>
    </source>
</evidence>
<evidence type="ECO:0000250" key="3">
    <source>
        <dbReference type="UniProtKB" id="P26817"/>
    </source>
</evidence>
<evidence type="ECO:0000250" key="4">
    <source>
        <dbReference type="UniProtKB" id="Q99MK8"/>
    </source>
</evidence>
<evidence type="ECO:0000255" key="5">
    <source>
        <dbReference type="PROSITE-ProRule" id="PRU00145"/>
    </source>
</evidence>
<evidence type="ECO:0000255" key="6">
    <source>
        <dbReference type="PROSITE-ProRule" id="PRU00159"/>
    </source>
</evidence>
<evidence type="ECO:0000255" key="7">
    <source>
        <dbReference type="PROSITE-ProRule" id="PRU00171"/>
    </source>
</evidence>
<evidence type="ECO:0000255" key="8">
    <source>
        <dbReference type="PROSITE-ProRule" id="PRU00618"/>
    </source>
</evidence>
<evidence type="ECO:0000255" key="9">
    <source>
        <dbReference type="PROSITE-ProRule" id="PRU10027"/>
    </source>
</evidence>
<evidence type="ECO:0000305" key="10"/>
<comment type="function">
    <text evidence="1 2 4">Specifically phosphorylates the agonist-occupied form of the beta-adrenergic and closely related receptors, probably inducing a desensitization of them. Key regulator of LPAR1 signaling (By similarity). Competes with RALA for binding to LPAR1 thus affecting the signaling properties of the receptor (By similarity). Desensitizes LPAR1 and LPAR2 in a phosphorylation-independent manner (By similarity). Positively regulates ciliary smoothened (SMO)-dependent Hedgehog (Hh) signaling pathway by facilitating the trafficking of SMO into the cilium and the stimulation of SMO activity (By similarity). Inhibits relaxation of airway smooth muscle in response to blue light (By similarity).</text>
</comment>
<comment type="catalytic activity">
    <reaction evidence="3">
        <text>[beta-adrenergic receptor] + ATP = [beta-adrenergic receptor]-phosphate + ADP + H(+)</text>
        <dbReference type="Rhea" id="RHEA:19429"/>
        <dbReference type="Rhea" id="RHEA-COMP:11222"/>
        <dbReference type="Rhea" id="RHEA-COMP:11223"/>
        <dbReference type="ChEBI" id="CHEBI:15378"/>
        <dbReference type="ChEBI" id="CHEBI:30616"/>
        <dbReference type="ChEBI" id="CHEBI:43176"/>
        <dbReference type="ChEBI" id="CHEBI:68546"/>
        <dbReference type="ChEBI" id="CHEBI:456216"/>
        <dbReference type="EC" id="2.7.11.15"/>
    </reaction>
    <physiologicalReaction direction="left-to-right" evidence="3">
        <dbReference type="Rhea" id="RHEA:19430"/>
    </physiologicalReaction>
</comment>
<comment type="activity regulation">
    <text evidence="1">In contrast to other AGC family kinases, the catalytic activity is solely regulated by the binding of substrates and ligands, not by phosphorylation of the kinase domain.</text>
</comment>
<comment type="subunit">
    <text evidence="1 2 3">Interacts with the heterodimer formed by GNB1 and GNG2 (By similarity). Interacts with GIT1 (By similarity). Interacts with, and phosphorylates chemokine-stimulated CCR5 (By similarity). Interacts with ARRB1 (By similarity). Interacts with LPAR1 and LPAR2 (By similarity). Interacts with RALA in response to LPAR1 activation (By similarity). ADRBK1 and RALA mutually inhibit each other's binding to LPAR1 (By similarity). Interacts with ADRB2 (By similarity).</text>
</comment>
<comment type="subcellular location">
    <subcellularLocation>
        <location evidence="3">Cytoplasm</location>
    </subcellularLocation>
    <subcellularLocation>
        <location evidence="1">Cell membrane</location>
    </subcellularLocation>
    <subcellularLocation>
        <location evidence="3">Postsynapse</location>
    </subcellularLocation>
    <subcellularLocation>
        <location evidence="3">Presynapse</location>
    </subcellularLocation>
</comment>
<comment type="domain">
    <text evidence="1">The PH domain binds anionic phospholipids and helps recruiting ADRBK1 from the cytoplasm to plasma membrane close to activated receptors. It mediates binding to G protein beta and gamma subunits, competing with G-alpha subunits and other G-betagamma effectors.</text>
</comment>
<comment type="similarity">
    <text evidence="10">Belongs to the protein kinase superfamily. AGC Ser/Thr protein kinase family. GPRK subfamily.</text>
</comment>
<dbReference type="EC" id="2.7.11.15" evidence="3"/>
<dbReference type="EMBL" id="S81843">
    <property type="protein sequence ID" value="AAD14377.1"/>
    <property type="molecule type" value="mRNA"/>
</dbReference>
<dbReference type="RefSeq" id="NP_001268501.1">
    <property type="nucleotide sequence ID" value="NM_001281572.1"/>
</dbReference>
<dbReference type="SMR" id="Q64682"/>
<dbReference type="STRING" id="10036.ENSMAUP00000020508"/>
<dbReference type="GeneID" id="101825875"/>
<dbReference type="KEGG" id="maua:101825875"/>
<dbReference type="CTD" id="156"/>
<dbReference type="eggNOG" id="KOG0986">
    <property type="taxonomic scope" value="Eukaryota"/>
</dbReference>
<dbReference type="OrthoDB" id="354826at2759"/>
<dbReference type="BRENDA" id="2.7.11.15">
    <property type="organism ID" value="3239"/>
</dbReference>
<dbReference type="Proteomes" id="UP000189706">
    <property type="component" value="Unplaced"/>
</dbReference>
<dbReference type="GO" id="GO:0042995">
    <property type="term" value="C:cell projection"/>
    <property type="evidence" value="ECO:0007669"/>
    <property type="project" value="UniProtKB-KW"/>
</dbReference>
<dbReference type="GO" id="GO:0005737">
    <property type="term" value="C:cytoplasm"/>
    <property type="evidence" value="ECO:0007669"/>
    <property type="project" value="UniProtKB-SubCell"/>
</dbReference>
<dbReference type="GO" id="GO:0005886">
    <property type="term" value="C:plasma membrane"/>
    <property type="evidence" value="ECO:0007669"/>
    <property type="project" value="UniProtKB-SubCell"/>
</dbReference>
<dbReference type="GO" id="GO:0098794">
    <property type="term" value="C:postsynapse"/>
    <property type="evidence" value="ECO:0007669"/>
    <property type="project" value="UniProtKB-SubCell"/>
</dbReference>
<dbReference type="GO" id="GO:0098793">
    <property type="term" value="C:presynapse"/>
    <property type="evidence" value="ECO:0007669"/>
    <property type="project" value="UniProtKB-SubCell"/>
</dbReference>
<dbReference type="GO" id="GO:0005524">
    <property type="term" value="F:ATP binding"/>
    <property type="evidence" value="ECO:0007669"/>
    <property type="project" value="UniProtKB-KW"/>
</dbReference>
<dbReference type="GO" id="GO:0047696">
    <property type="term" value="F:beta-adrenergic receptor kinase activity"/>
    <property type="evidence" value="ECO:0007669"/>
    <property type="project" value="UniProtKB-EC"/>
</dbReference>
<dbReference type="GO" id="GO:0001664">
    <property type="term" value="F:G protein-coupled receptor binding"/>
    <property type="evidence" value="ECO:0007669"/>
    <property type="project" value="TreeGrafter"/>
</dbReference>
<dbReference type="GO" id="GO:0004703">
    <property type="term" value="F:G protein-coupled receptor kinase activity"/>
    <property type="evidence" value="ECO:0007669"/>
    <property type="project" value="InterPro"/>
</dbReference>
<dbReference type="GO" id="GO:0002029">
    <property type="term" value="P:desensitization of G protein-coupled receptor signaling pathway"/>
    <property type="evidence" value="ECO:0007669"/>
    <property type="project" value="TreeGrafter"/>
</dbReference>
<dbReference type="GO" id="GO:0007186">
    <property type="term" value="P:G protein-coupled receptor signaling pathway"/>
    <property type="evidence" value="ECO:0007669"/>
    <property type="project" value="TreeGrafter"/>
</dbReference>
<dbReference type="GO" id="GO:1901081">
    <property type="term" value="P:negative regulation of relaxation of smooth muscle"/>
    <property type="evidence" value="ECO:0000250"/>
    <property type="project" value="UniProtKB"/>
</dbReference>
<dbReference type="GO" id="GO:0002026">
    <property type="term" value="P:regulation of the force of heart contraction"/>
    <property type="evidence" value="ECO:0007669"/>
    <property type="project" value="TreeGrafter"/>
</dbReference>
<dbReference type="CDD" id="cd01240">
    <property type="entry name" value="PH_GRK2_subgroup"/>
    <property type="match status" value="1"/>
</dbReference>
<dbReference type="CDD" id="cd08747">
    <property type="entry name" value="RGS_GRK2_GRK3"/>
    <property type="match status" value="1"/>
</dbReference>
<dbReference type="CDD" id="cd14223">
    <property type="entry name" value="STKc_GRK2"/>
    <property type="match status" value="1"/>
</dbReference>
<dbReference type="FunFam" id="1.10.510.10:FF:000118">
    <property type="entry name" value="G protein-coupled receptor kinase"/>
    <property type="match status" value="1"/>
</dbReference>
<dbReference type="FunFam" id="2.30.29.30:FF:000084">
    <property type="entry name" value="G protein-coupled receptor kinase"/>
    <property type="match status" value="1"/>
</dbReference>
<dbReference type="FunFam" id="3.30.200.20:FF:000068">
    <property type="entry name" value="G protein-coupled receptor kinase"/>
    <property type="match status" value="1"/>
</dbReference>
<dbReference type="Gene3D" id="3.30.200.20">
    <property type="entry name" value="Phosphorylase Kinase, domain 1"/>
    <property type="match status" value="1"/>
</dbReference>
<dbReference type="Gene3D" id="2.30.29.30">
    <property type="entry name" value="Pleckstrin-homology domain (PH domain)/Phosphotyrosine-binding domain (PTB)"/>
    <property type="match status" value="1"/>
</dbReference>
<dbReference type="Gene3D" id="1.10.167.10">
    <property type="entry name" value="Regulator of G-protein Signalling 4, domain 2"/>
    <property type="match status" value="1"/>
</dbReference>
<dbReference type="Gene3D" id="1.10.510.10">
    <property type="entry name" value="Transferase(Phosphotransferase) domain 1"/>
    <property type="match status" value="1"/>
</dbReference>
<dbReference type="InterPro" id="IPR000961">
    <property type="entry name" value="AGC-kinase_C"/>
</dbReference>
<dbReference type="InterPro" id="IPR000239">
    <property type="entry name" value="GPCR_kinase"/>
</dbReference>
<dbReference type="InterPro" id="IPR011009">
    <property type="entry name" value="Kinase-like_dom_sf"/>
</dbReference>
<dbReference type="InterPro" id="IPR011993">
    <property type="entry name" value="PH-like_dom_sf"/>
</dbReference>
<dbReference type="InterPro" id="IPR001849">
    <property type="entry name" value="PH_domain"/>
</dbReference>
<dbReference type="InterPro" id="IPR000719">
    <property type="entry name" value="Prot_kinase_dom"/>
</dbReference>
<dbReference type="InterPro" id="IPR017441">
    <property type="entry name" value="Protein_kinase_ATP_BS"/>
</dbReference>
<dbReference type="InterPro" id="IPR016137">
    <property type="entry name" value="RGS"/>
</dbReference>
<dbReference type="InterPro" id="IPR036305">
    <property type="entry name" value="RGS_sf"/>
</dbReference>
<dbReference type="InterPro" id="IPR044926">
    <property type="entry name" value="RGS_subdomain_2"/>
</dbReference>
<dbReference type="InterPro" id="IPR008271">
    <property type="entry name" value="Ser/Thr_kinase_AS"/>
</dbReference>
<dbReference type="PANTHER" id="PTHR24355:SF22">
    <property type="entry name" value="BETA-ADRENERGIC RECEPTOR KINASE 1"/>
    <property type="match status" value="1"/>
</dbReference>
<dbReference type="PANTHER" id="PTHR24355">
    <property type="entry name" value="G PROTEIN-COUPLED RECEPTOR KINASE/RIBOSOMAL PROTEIN S6 KINASE"/>
    <property type="match status" value="1"/>
</dbReference>
<dbReference type="Pfam" id="PF00169">
    <property type="entry name" value="PH"/>
    <property type="match status" value="1"/>
</dbReference>
<dbReference type="Pfam" id="PF00069">
    <property type="entry name" value="Pkinase"/>
    <property type="match status" value="1"/>
</dbReference>
<dbReference type="Pfam" id="PF00615">
    <property type="entry name" value="RGS"/>
    <property type="match status" value="1"/>
</dbReference>
<dbReference type="PRINTS" id="PR00717">
    <property type="entry name" value="GPCRKINASE"/>
</dbReference>
<dbReference type="SMART" id="SM00233">
    <property type="entry name" value="PH"/>
    <property type="match status" value="1"/>
</dbReference>
<dbReference type="SMART" id="SM00315">
    <property type="entry name" value="RGS"/>
    <property type="match status" value="1"/>
</dbReference>
<dbReference type="SMART" id="SM00133">
    <property type="entry name" value="S_TK_X"/>
    <property type="match status" value="1"/>
</dbReference>
<dbReference type="SMART" id="SM00220">
    <property type="entry name" value="S_TKc"/>
    <property type="match status" value="1"/>
</dbReference>
<dbReference type="SUPFAM" id="SSF50729">
    <property type="entry name" value="PH domain-like"/>
    <property type="match status" value="1"/>
</dbReference>
<dbReference type="SUPFAM" id="SSF56112">
    <property type="entry name" value="Protein kinase-like (PK-like)"/>
    <property type="match status" value="1"/>
</dbReference>
<dbReference type="SUPFAM" id="SSF48097">
    <property type="entry name" value="Regulator of G-protein signaling, RGS"/>
    <property type="match status" value="1"/>
</dbReference>
<dbReference type="PROSITE" id="PS51285">
    <property type="entry name" value="AGC_KINASE_CTER"/>
    <property type="match status" value="1"/>
</dbReference>
<dbReference type="PROSITE" id="PS50003">
    <property type="entry name" value="PH_DOMAIN"/>
    <property type="match status" value="1"/>
</dbReference>
<dbReference type="PROSITE" id="PS00107">
    <property type="entry name" value="PROTEIN_KINASE_ATP"/>
    <property type="match status" value="1"/>
</dbReference>
<dbReference type="PROSITE" id="PS50011">
    <property type="entry name" value="PROTEIN_KINASE_DOM"/>
    <property type="match status" value="1"/>
</dbReference>
<dbReference type="PROSITE" id="PS00108">
    <property type="entry name" value="PROTEIN_KINASE_ST"/>
    <property type="match status" value="1"/>
</dbReference>
<dbReference type="PROSITE" id="PS50132">
    <property type="entry name" value="RGS"/>
    <property type="match status" value="1"/>
</dbReference>
<feature type="chain" id="PRO_0000085628" description="Beta-adrenergic receptor kinase 1">
    <location>
        <begin position="1"/>
        <end position="689"/>
    </location>
</feature>
<feature type="domain" description="RGS" evidence="7">
    <location>
        <begin position="54"/>
        <end position="175"/>
    </location>
</feature>
<feature type="domain" description="Protein kinase" evidence="6">
    <location>
        <begin position="191"/>
        <end position="453"/>
    </location>
</feature>
<feature type="domain" description="AGC-kinase C-terminal" evidence="8">
    <location>
        <begin position="454"/>
        <end position="521"/>
    </location>
</feature>
<feature type="domain" description="PH" evidence="5">
    <location>
        <begin position="558"/>
        <end position="652"/>
    </location>
</feature>
<feature type="region of interest" description="N-terminal">
    <location>
        <begin position="1"/>
        <end position="190"/>
    </location>
</feature>
<feature type="active site" description="Proton acceptor" evidence="6 9">
    <location>
        <position position="317"/>
    </location>
</feature>
<feature type="binding site" evidence="6">
    <location>
        <begin position="197"/>
        <end position="205"/>
    </location>
    <ligand>
        <name>ATP</name>
        <dbReference type="ChEBI" id="CHEBI:30616"/>
    </ligand>
</feature>
<feature type="binding site" evidence="6">
    <location>
        <position position="220"/>
    </location>
    <ligand>
        <name>ATP</name>
        <dbReference type="ChEBI" id="CHEBI:30616"/>
    </ligand>
</feature>
<feature type="site" description="Required for receptor phosphorylation" evidence="2">
    <location>
        <position position="3"/>
    </location>
</feature>
<feature type="site" description="Required for receptor phosphorylation" evidence="2">
    <location>
        <position position="4"/>
    </location>
</feature>
<feature type="site" description="Required for receptor phosphorylation" evidence="2">
    <location>
        <position position="10"/>
    </location>
</feature>
<feature type="modified residue" description="Phosphoserine" evidence="2">
    <location>
        <position position="670"/>
    </location>
</feature>
<sequence>MADLEAVLADVSYLMAMEKSKATPAARASKKILLPEPSIRSVMQKYLEDRGEVTFEKIFSQKLGYLLFRDFCLNYLEEAKPLVEFYEEIKKYEKLETEEERVVRSREIFDSYIMKELLACSHPFSKNATEHVQGHLVKKQVPPDLFQPYIEEICQNLRGDVFQKFIESDKFTRFCQWKNVELNIHLTMNDFSVHRIIGRGGFGEVYGCRKADTGKMYAMKCLDKKRIKMKQGETLALNERIMLSLVSTGDCPFIVCMSYAFRTPDNLSFILDLMNGGDLHYHLSQHGVFSEADMRSYAAEIILGLEHMHNRFVVYRDLKPANILLDEHGHVRISDLGLACDFSKKKPHASVGTHGYMAPEVLQKGVAYDSSADWFSLGCMLFKLLRGHSPFRQHKTKDKHEIDRMTLTMAVELPDSFSPELRSLLEGLLQRDVNRRLGCLGRGAQEVKESPFFRSLDWQMVFLQKYPPPLIPPRGEVNAADAFDIGSFDEEDTKGIKLPDSDQELYRNFPLTISERWQQEVAETVFDTINAETDRLEARKKAKNKQLGHEEDYALGKDCIMHGYMSKMGNPFLTQWQRRYFYLFPNRLEWRGEGEAPQSLLTMEEIQSVEETQIKERKCLLLKIRGGKQFVLQCDSDPELVQWKKELRDAYREAQQLVQRVPKMKNKPRSPVVELSKVPLIQRGSANGL</sequence>
<proteinExistence type="evidence at transcript level"/>